<proteinExistence type="inferred from homology"/>
<dbReference type="EMBL" id="CP000026">
    <property type="protein sequence ID" value="AAV79176.1"/>
    <property type="molecule type" value="Genomic_DNA"/>
</dbReference>
<dbReference type="RefSeq" id="WP_001135571.1">
    <property type="nucleotide sequence ID" value="NC_006511.1"/>
</dbReference>
<dbReference type="SMR" id="Q5PLY0"/>
<dbReference type="KEGG" id="spt:SPA3363"/>
<dbReference type="HOGENOM" id="CLU_054493_0_0_6"/>
<dbReference type="Proteomes" id="UP000008185">
    <property type="component" value="Chromosome"/>
</dbReference>
<dbReference type="GO" id="GO:0005737">
    <property type="term" value="C:cytoplasm"/>
    <property type="evidence" value="ECO:0007669"/>
    <property type="project" value="UniProtKB-SubCell"/>
</dbReference>
<dbReference type="GO" id="GO:0044183">
    <property type="term" value="F:protein folding chaperone"/>
    <property type="evidence" value="ECO:0007669"/>
    <property type="project" value="TreeGrafter"/>
</dbReference>
<dbReference type="GO" id="GO:0051082">
    <property type="term" value="F:unfolded protein binding"/>
    <property type="evidence" value="ECO:0007669"/>
    <property type="project" value="UniProtKB-UniRule"/>
</dbReference>
<dbReference type="GO" id="GO:0042026">
    <property type="term" value="P:protein refolding"/>
    <property type="evidence" value="ECO:0007669"/>
    <property type="project" value="TreeGrafter"/>
</dbReference>
<dbReference type="CDD" id="cd00498">
    <property type="entry name" value="Hsp33"/>
    <property type="match status" value="1"/>
</dbReference>
<dbReference type="FunFam" id="3.55.30.10:FF:000001">
    <property type="entry name" value="33 kDa chaperonin"/>
    <property type="match status" value="1"/>
</dbReference>
<dbReference type="Gene3D" id="1.10.287.480">
    <property type="entry name" value="helix hairpin bin"/>
    <property type="match status" value="1"/>
</dbReference>
<dbReference type="Gene3D" id="3.55.30.10">
    <property type="entry name" value="Hsp33 domain"/>
    <property type="match status" value="1"/>
</dbReference>
<dbReference type="Gene3D" id="3.90.1280.10">
    <property type="entry name" value="HSP33 redox switch-like"/>
    <property type="match status" value="1"/>
</dbReference>
<dbReference type="HAMAP" id="MF_00117">
    <property type="entry name" value="HslO"/>
    <property type="match status" value="1"/>
</dbReference>
<dbReference type="InterPro" id="IPR000397">
    <property type="entry name" value="Heat_shock_Hsp33"/>
</dbReference>
<dbReference type="InterPro" id="IPR016154">
    <property type="entry name" value="Heat_shock_Hsp33_C"/>
</dbReference>
<dbReference type="InterPro" id="IPR016153">
    <property type="entry name" value="Heat_shock_Hsp33_N"/>
</dbReference>
<dbReference type="InterPro" id="IPR023212">
    <property type="entry name" value="Hsp33_helix_hairpin_bin_dom_sf"/>
</dbReference>
<dbReference type="NCBIfam" id="NF001033">
    <property type="entry name" value="PRK00114.1"/>
    <property type="match status" value="1"/>
</dbReference>
<dbReference type="PANTHER" id="PTHR30111">
    <property type="entry name" value="33 KDA CHAPERONIN"/>
    <property type="match status" value="1"/>
</dbReference>
<dbReference type="PANTHER" id="PTHR30111:SF1">
    <property type="entry name" value="33 KDA CHAPERONIN"/>
    <property type="match status" value="1"/>
</dbReference>
<dbReference type="Pfam" id="PF01430">
    <property type="entry name" value="HSP33"/>
    <property type="match status" value="1"/>
</dbReference>
<dbReference type="PIRSF" id="PIRSF005261">
    <property type="entry name" value="Heat_shock_Hsp33"/>
    <property type="match status" value="1"/>
</dbReference>
<dbReference type="SUPFAM" id="SSF64397">
    <property type="entry name" value="Hsp33 domain"/>
    <property type="match status" value="1"/>
</dbReference>
<dbReference type="SUPFAM" id="SSF118352">
    <property type="entry name" value="HSP33 redox switch-like"/>
    <property type="match status" value="1"/>
</dbReference>
<gene>
    <name evidence="1" type="primary">hslO</name>
    <name type="ordered locus">SPA3363</name>
</gene>
<accession>Q5PLY0</accession>
<evidence type="ECO:0000255" key="1">
    <source>
        <dbReference type="HAMAP-Rule" id="MF_00117"/>
    </source>
</evidence>
<feature type="chain" id="PRO_0000238088" description="33 kDa chaperonin">
    <location>
        <begin position="1"/>
        <end position="292"/>
    </location>
</feature>
<feature type="disulfide bond" description="Redox-active" evidence="1">
    <location>
        <begin position="230"/>
        <end position="232"/>
    </location>
</feature>
<feature type="disulfide bond" description="Redox-active" evidence="1">
    <location>
        <begin position="263"/>
        <end position="266"/>
    </location>
</feature>
<protein>
    <recommendedName>
        <fullName evidence="1">33 kDa chaperonin</fullName>
    </recommendedName>
    <alternativeName>
        <fullName evidence="1">Heat shock protein 33 homolog</fullName>
        <shortName evidence="1">HSP33</shortName>
    </alternativeName>
</protein>
<sequence length="292" mass="32357">MPQHDQLHRYLFENFAVRGELVTVSETLQQILDNHTYPQPVKTVLAELLVATSLLTATLKFAGDITVQLQGDGPLSLAVINGNNQQQMRGVARVQGDIPDNADLKTLVGNGYLVITITPEEGERYQGVVGLEGDTLAACLEDYFLRSEQLPTRLFIRTGDVDGKPAAGGMLLQVMPAQNAQAEDFDHLAMLTETIKSEELLTLPANDVLWRLYHEEEVTLYDPQDVEFKCTCSRERCAGALKTLPDEEVDSILAEEGEIDMHCDYCGNHYLFNAMDIAEIRNNASPADPQVH</sequence>
<comment type="function">
    <text evidence="1">Redox regulated molecular chaperone. Protects both thermally unfolding and oxidatively damaged proteins from irreversible aggregation. Plays an important role in the bacterial defense system toward oxidative stress.</text>
</comment>
<comment type="subcellular location">
    <subcellularLocation>
        <location evidence="1">Cytoplasm</location>
    </subcellularLocation>
</comment>
<comment type="PTM">
    <text evidence="1">Under oxidizing conditions two disulfide bonds are formed involving the reactive cysteines. Under reducing conditions zinc is bound to the reactive cysteines and the protein is inactive.</text>
</comment>
<comment type="similarity">
    <text evidence="1">Belongs to the HSP33 family.</text>
</comment>
<keyword id="KW-0143">Chaperone</keyword>
<keyword id="KW-0963">Cytoplasm</keyword>
<keyword id="KW-1015">Disulfide bond</keyword>
<keyword id="KW-0676">Redox-active center</keyword>
<keyword id="KW-0862">Zinc</keyword>
<reference key="1">
    <citation type="journal article" date="2004" name="Nat. Genet.">
        <title>Comparison of genome degradation in Paratyphi A and Typhi, human-restricted serovars of Salmonella enterica that cause typhoid.</title>
        <authorList>
            <person name="McClelland M."/>
            <person name="Sanderson K.E."/>
            <person name="Clifton S.W."/>
            <person name="Latreille P."/>
            <person name="Porwollik S."/>
            <person name="Sabo A."/>
            <person name="Meyer R."/>
            <person name="Bieri T."/>
            <person name="Ozersky P."/>
            <person name="McLellan M."/>
            <person name="Harkins C.R."/>
            <person name="Wang C."/>
            <person name="Nguyen C."/>
            <person name="Berghoff A."/>
            <person name="Elliott G."/>
            <person name="Kohlberg S."/>
            <person name="Strong C."/>
            <person name="Du F."/>
            <person name="Carter J."/>
            <person name="Kremizki C."/>
            <person name="Layman D."/>
            <person name="Leonard S."/>
            <person name="Sun H."/>
            <person name="Fulton L."/>
            <person name="Nash W."/>
            <person name="Miner T."/>
            <person name="Minx P."/>
            <person name="Delehaunty K."/>
            <person name="Fronick C."/>
            <person name="Magrini V."/>
            <person name="Nhan M."/>
            <person name="Warren W."/>
            <person name="Florea L."/>
            <person name="Spieth J."/>
            <person name="Wilson R.K."/>
        </authorList>
    </citation>
    <scope>NUCLEOTIDE SEQUENCE [LARGE SCALE GENOMIC DNA]</scope>
    <source>
        <strain>ATCC 9150 / SARB42</strain>
    </source>
</reference>
<organism>
    <name type="scientific">Salmonella paratyphi A (strain ATCC 9150 / SARB42)</name>
    <dbReference type="NCBI Taxonomy" id="295319"/>
    <lineage>
        <taxon>Bacteria</taxon>
        <taxon>Pseudomonadati</taxon>
        <taxon>Pseudomonadota</taxon>
        <taxon>Gammaproteobacteria</taxon>
        <taxon>Enterobacterales</taxon>
        <taxon>Enterobacteriaceae</taxon>
        <taxon>Salmonella</taxon>
    </lineage>
</organism>
<name>HSLO_SALPA</name>